<dbReference type="EMBL" id="AM902716">
    <property type="protein sequence ID" value="CAP45300.1"/>
    <property type="molecule type" value="Genomic_DNA"/>
</dbReference>
<dbReference type="SMR" id="A9IIZ4"/>
<dbReference type="STRING" id="94624.Bpet4948"/>
<dbReference type="KEGG" id="bpt:Bpet4948"/>
<dbReference type="eggNOG" id="COG0185">
    <property type="taxonomic scope" value="Bacteria"/>
</dbReference>
<dbReference type="Proteomes" id="UP000001225">
    <property type="component" value="Chromosome"/>
</dbReference>
<dbReference type="GO" id="GO:0005737">
    <property type="term" value="C:cytoplasm"/>
    <property type="evidence" value="ECO:0007669"/>
    <property type="project" value="UniProtKB-ARBA"/>
</dbReference>
<dbReference type="GO" id="GO:0015935">
    <property type="term" value="C:small ribosomal subunit"/>
    <property type="evidence" value="ECO:0007669"/>
    <property type="project" value="InterPro"/>
</dbReference>
<dbReference type="GO" id="GO:0019843">
    <property type="term" value="F:rRNA binding"/>
    <property type="evidence" value="ECO:0007669"/>
    <property type="project" value="UniProtKB-UniRule"/>
</dbReference>
<dbReference type="GO" id="GO:0003735">
    <property type="term" value="F:structural constituent of ribosome"/>
    <property type="evidence" value="ECO:0007669"/>
    <property type="project" value="InterPro"/>
</dbReference>
<dbReference type="GO" id="GO:0000028">
    <property type="term" value="P:ribosomal small subunit assembly"/>
    <property type="evidence" value="ECO:0007669"/>
    <property type="project" value="TreeGrafter"/>
</dbReference>
<dbReference type="GO" id="GO:0006412">
    <property type="term" value="P:translation"/>
    <property type="evidence" value="ECO:0007669"/>
    <property type="project" value="UniProtKB-UniRule"/>
</dbReference>
<dbReference type="FunFam" id="3.30.860.10:FF:000001">
    <property type="entry name" value="30S ribosomal protein S19"/>
    <property type="match status" value="1"/>
</dbReference>
<dbReference type="Gene3D" id="3.30.860.10">
    <property type="entry name" value="30s Ribosomal Protein S19, Chain A"/>
    <property type="match status" value="1"/>
</dbReference>
<dbReference type="HAMAP" id="MF_00531">
    <property type="entry name" value="Ribosomal_uS19"/>
    <property type="match status" value="1"/>
</dbReference>
<dbReference type="InterPro" id="IPR002222">
    <property type="entry name" value="Ribosomal_uS19"/>
</dbReference>
<dbReference type="InterPro" id="IPR005732">
    <property type="entry name" value="Ribosomal_uS19_bac-type"/>
</dbReference>
<dbReference type="InterPro" id="IPR020934">
    <property type="entry name" value="Ribosomal_uS19_CS"/>
</dbReference>
<dbReference type="InterPro" id="IPR023575">
    <property type="entry name" value="Ribosomal_uS19_SF"/>
</dbReference>
<dbReference type="NCBIfam" id="TIGR01050">
    <property type="entry name" value="rpsS_bact"/>
    <property type="match status" value="1"/>
</dbReference>
<dbReference type="PANTHER" id="PTHR11880">
    <property type="entry name" value="RIBOSOMAL PROTEIN S19P FAMILY MEMBER"/>
    <property type="match status" value="1"/>
</dbReference>
<dbReference type="PANTHER" id="PTHR11880:SF8">
    <property type="entry name" value="SMALL RIBOSOMAL SUBUNIT PROTEIN US19M"/>
    <property type="match status" value="1"/>
</dbReference>
<dbReference type="Pfam" id="PF00203">
    <property type="entry name" value="Ribosomal_S19"/>
    <property type="match status" value="1"/>
</dbReference>
<dbReference type="PIRSF" id="PIRSF002144">
    <property type="entry name" value="Ribosomal_S19"/>
    <property type="match status" value="1"/>
</dbReference>
<dbReference type="PRINTS" id="PR00975">
    <property type="entry name" value="RIBOSOMALS19"/>
</dbReference>
<dbReference type="SUPFAM" id="SSF54570">
    <property type="entry name" value="Ribosomal protein S19"/>
    <property type="match status" value="1"/>
</dbReference>
<dbReference type="PROSITE" id="PS00323">
    <property type="entry name" value="RIBOSOMAL_S19"/>
    <property type="match status" value="1"/>
</dbReference>
<comment type="function">
    <text evidence="1">Protein S19 forms a complex with S13 that binds strongly to the 16S ribosomal RNA.</text>
</comment>
<comment type="similarity">
    <text evidence="1">Belongs to the universal ribosomal protein uS19 family.</text>
</comment>
<gene>
    <name evidence="1" type="primary">rpsS</name>
    <name type="ordered locus">Bpet4948</name>
</gene>
<protein>
    <recommendedName>
        <fullName evidence="1">Small ribosomal subunit protein uS19</fullName>
    </recommendedName>
    <alternativeName>
        <fullName evidence="2">30S ribosomal protein S19</fullName>
    </alternativeName>
</protein>
<evidence type="ECO:0000255" key="1">
    <source>
        <dbReference type="HAMAP-Rule" id="MF_00531"/>
    </source>
</evidence>
<evidence type="ECO:0000305" key="2"/>
<proteinExistence type="inferred from homology"/>
<name>RS19_BORPD</name>
<keyword id="KW-0687">Ribonucleoprotein</keyword>
<keyword id="KW-0689">Ribosomal protein</keyword>
<keyword id="KW-0694">RNA-binding</keyword>
<keyword id="KW-0699">rRNA-binding</keyword>
<accession>A9IIZ4</accession>
<feature type="chain" id="PRO_1000127935" description="Small ribosomal subunit protein uS19">
    <location>
        <begin position="1"/>
        <end position="91"/>
    </location>
</feature>
<sequence>MSRSIKKGPFVDAHLIKKVDTAVAGKDKKPIKTWSRRSTILPEFIGLTIAVHNGRQHVPVYINENMVGHKLGEFALTRTFKGHAADKKAKR</sequence>
<organism>
    <name type="scientific">Bordetella petrii (strain ATCC BAA-461 / DSM 12804 / CCUG 43448)</name>
    <dbReference type="NCBI Taxonomy" id="340100"/>
    <lineage>
        <taxon>Bacteria</taxon>
        <taxon>Pseudomonadati</taxon>
        <taxon>Pseudomonadota</taxon>
        <taxon>Betaproteobacteria</taxon>
        <taxon>Burkholderiales</taxon>
        <taxon>Alcaligenaceae</taxon>
        <taxon>Bordetella</taxon>
    </lineage>
</organism>
<reference key="1">
    <citation type="journal article" date="2008" name="BMC Genomics">
        <title>The missing link: Bordetella petrii is endowed with both the metabolic versatility of environmental bacteria and virulence traits of pathogenic Bordetellae.</title>
        <authorList>
            <person name="Gross R."/>
            <person name="Guzman C.A."/>
            <person name="Sebaihia M."/>
            <person name="Martin dos Santos V.A.P."/>
            <person name="Pieper D.H."/>
            <person name="Koebnik R."/>
            <person name="Lechner M."/>
            <person name="Bartels D."/>
            <person name="Buhrmester J."/>
            <person name="Choudhuri J.V."/>
            <person name="Ebensen T."/>
            <person name="Gaigalat L."/>
            <person name="Herrmann S."/>
            <person name="Khachane A.N."/>
            <person name="Larisch C."/>
            <person name="Link S."/>
            <person name="Linke B."/>
            <person name="Meyer F."/>
            <person name="Mormann S."/>
            <person name="Nakunst D."/>
            <person name="Rueckert C."/>
            <person name="Schneiker-Bekel S."/>
            <person name="Schulze K."/>
            <person name="Voerholter F.-J."/>
            <person name="Yevsa T."/>
            <person name="Engle J.T."/>
            <person name="Goldman W.E."/>
            <person name="Puehler A."/>
            <person name="Goebel U.B."/>
            <person name="Goesmann A."/>
            <person name="Bloecker H."/>
            <person name="Kaiser O."/>
            <person name="Martinez-Arias R."/>
        </authorList>
    </citation>
    <scope>NUCLEOTIDE SEQUENCE [LARGE SCALE GENOMIC DNA]</scope>
    <source>
        <strain>ATCC BAA-461 / DSM 12804 / CCUG 43448</strain>
    </source>
</reference>